<protein>
    <recommendedName>
        <fullName evidence="1">Aspartate--tRNA(Asp/Asn) ligase</fullName>
        <ecNumber evidence="1">6.1.1.23</ecNumber>
    </recommendedName>
    <alternativeName>
        <fullName evidence="1">Aspartyl-tRNA synthetase</fullName>
        <shortName evidence="1">AspRS</shortName>
    </alternativeName>
    <alternativeName>
        <fullName evidence="1">Non-discriminating aspartyl-tRNA synthetase</fullName>
        <shortName evidence="1">ND-AspRS</shortName>
    </alternativeName>
</protein>
<comment type="function">
    <text evidence="1">Aspartyl-tRNA synthetase with relaxed tRNA specificity since it is able to aspartylate not only its cognate tRNA(Asp) but also tRNA(Asn). Reaction proceeds in two steps: L-aspartate is first activated by ATP to form Asp-AMP and then transferred to the acceptor end of tRNA(Asp/Asn).</text>
</comment>
<comment type="catalytic activity">
    <reaction evidence="1">
        <text>tRNA(Asx) + L-aspartate + ATP = L-aspartyl-tRNA(Asx) + AMP + diphosphate</text>
        <dbReference type="Rhea" id="RHEA:18349"/>
        <dbReference type="Rhea" id="RHEA-COMP:9710"/>
        <dbReference type="Rhea" id="RHEA-COMP:9711"/>
        <dbReference type="ChEBI" id="CHEBI:29991"/>
        <dbReference type="ChEBI" id="CHEBI:30616"/>
        <dbReference type="ChEBI" id="CHEBI:33019"/>
        <dbReference type="ChEBI" id="CHEBI:78442"/>
        <dbReference type="ChEBI" id="CHEBI:78516"/>
        <dbReference type="ChEBI" id="CHEBI:456215"/>
        <dbReference type="EC" id="6.1.1.23"/>
    </reaction>
</comment>
<comment type="subunit">
    <text evidence="1">Homodimer.</text>
</comment>
<comment type="subcellular location">
    <subcellularLocation>
        <location evidence="1">Cytoplasm</location>
    </subcellularLocation>
</comment>
<comment type="similarity">
    <text evidence="1">Belongs to the class-II aminoacyl-tRNA synthetase family. Type 1 subfamily.</text>
</comment>
<reference key="1">
    <citation type="journal article" date="2008" name="Proc. Natl. Acad. Sci. U.S.A.">
        <title>The genome of Cyanothece 51142, a unicellular diazotrophic cyanobacterium important in the marine nitrogen cycle.</title>
        <authorList>
            <person name="Welsh E.A."/>
            <person name="Liberton M."/>
            <person name="Stoeckel J."/>
            <person name="Loh T."/>
            <person name="Elvitigala T."/>
            <person name="Wang C."/>
            <person name="Wollam A."/>
            <person name="Fulton R.S."/>
            <person name="Clifton S.W."/>
            <person name="Jacobs J.M."/>
            <person name="Aurora R."/>
            <person name="Ghosh B.K."/>
            <person name="Sherman L.A."/>
            <person name="Smith R.D."/>
            <person name="Wilson R.K."/>
            <person name="Pakrasi H.B."/>
        </authorList>
    </citation>
    <scope>NUCLEOTIDE SEQUENCE [LARGE SCALE GENOMIC DNA]</scope>
    <source>
        <strain>ATCC 51142 / BH68</strain>
    </source>
</reference>
<feature type="chain" id="PRO_1000090986" description="Aspartate--tRNA(Asp/Asn) ligase">
    <location>
        <begin position="1"/>
        <end position="598"/>
    </location>
</feature>
<feature type="region of interest" description="Aspartate" evidence="1">
    <location>
        <begin position="202"/>
        <end position="205"/>
    </location>
</feature>
<feature type="binding site" evidence="1">
    <location>
        <position position="178"/>
    </location>
    <ligand>
        <name>L-aspartate</name>
        <dbReference type="ChEBI" id="CHEBI:29991"/>
    </ligand>
</feature>
<feature type="binding site" evidence="1">
    <location>
        <begin position="224"/>
        <end position="226"/>
    </location>
    <ligand>
        <name>ATP</name>
        <dbReference type="ChEBI" id="CHEBI:30616"/>
    </ligand>
</feature>
<feature type="binding site" evidence="1">
    <location>
        <position position="224"/>
    </location>
    <ligand>
        <name>L-aspartate</name>
        <dbReference type="ChEBI" id="CHEBI:29991"/>
    </ligand>
</feature>
<feature type="binding site" evidence="1">
    <location>
        <position position="233"/>
    </location>
    <ligand>
        <name>ATP</name>
        <dbReference type="ChEBI" id="CHEBI:30616"/>
    </ligand>
</feature>
<feature type="binding site" evidence="1">
    <location>
        <position position="458"/>
    </location>
    <ligand>
        <name>L-aspartate</name>
        <dbReference type="ChEBI" id="CHEBI:29991"/>
    </ligand>
</feature>
<feature type="binding site" evidence="1">
    <location>
        <position position="488"/>
    </location>
    <ligand>
        <name>ATP</name>
        <dbReference type="ChEBI" id="CHEBI:30616"/>
    </ligand>
</feature>
<feature type="binding site" evidence="1">
    <location>
        <position position="495"/>
    </location>
    <ligand>
        <name>L-aspartate</name>
        <dbReference type="ChEBI" id="CHEBI:29991"/>
    </ligand>
</feature>
<feature type="binding site" evidence="1">
    <location>
        <begin position="540"/>
        <end position="543"/>
    </location>
    <ligand>
        <name>ATP</name>
        <dbReference type="ChEBI" id="CHEBI:30616"/>
    </ligand>
</feature>
<feature type="site" description="Important for tRNA non-discrimination" evidence="1">
    <location>
        <position position="30"/>
    </location>
</feature>
<dbReference type="EC" id="6.1.1.23" evidence="1"/>
<dbReference type="EMBL" id="CP000806">
    <property type="protein sequence ID" value="ACB53500.1"/>
    <property type="molecule type" value="Genomic_DNA"/>
</dbReference>
<dbReference type="RefSeq" id="WP_009543769.1">
    <property type="nucleotide sequence ID" value="NC_010546.1"/>
</dbReference>
<dbReference type="SMR" id="B1WRQ9"/>
<dbReference type="STRING" id="43989.cce_4152"/>
<dbReference type="KEGG" id="cyt:cce_4152"/>
<dbReference type="eggNOG" id="COG0173">
    <property type="taxonomic scope" value="Bacteria"/>
</dbReference>
<dbReference type="HOGENOM" id="CLU_014330_3_2_3"/>
<dbReference type="OrthoDB" id="9802326at2"/>
<dbReference type="Proteomes" id="UP000001203">
    <property type="component" value="Chromosome circular"/>
</dbReference>
<dbReference type="GO" id="GO:0005737">
    <property type="term" value="C:cytoplasm"/>
    <property type="evidence" value="ECO:0007669"/>
    <property type="project" value="UniProtKB-SubCell"/>
</dbReference>
<dbReference type="GO" id="GO:0004815">
    <property type="term" value="F:aspartate-tRNA ligase activity"/>
    <property type="evidence" value="ECO:0007669"/>
    <property type="project" value="UniProtKB-UniRule"/>
</dbReference>
<dbReference type="GO" id="GO:0050560">
    <property type="term" value="F:aspartate-tRNA(Asn) ligase activity"/>
    <property type="evidence" value="ECO:0007669"/>
    <property type="project" value="UniProtKB-EC"/>
</dbReference>
<dbReference type="GO" id="GO:0005524">
    <property type="term" value="F:ATP binding"/>
    <property type="evidence" value="ECO:0007669"/>
    <property type="project" value="UniProtKB-UniRule"/>
</dbReference>
<dbReference type="GO" id="GO:0003676">
    <property type="term" value="F:nucleic acid binding"/>
    <property type="evidence" value="ECO:0007669"/>
    <property type="project" value="InterPro"/>
</dbReference>
<dbReference type="GO" id="GO:0006422">
    <property type="term" value="P:aspartyl-tRNA aminoacylation"/>
    <property type="evidence" value="ECO:0007669"/>
    <property type="project" value="UniProtKB-UniRule"/>
</dbReference>
<dbReference type="CDD" id="cd00777">
    <property type="entry name" value="AspRS_core"/>
    <property type="match status" value="1"/>
</dbReference>
<dbReference type="CDD" id="cd04317">
    <property type="entry name" value="EcAspRS_like_N"/>
    <property type="match status" value="1"/>
</dbReference>
<dbReference type="Gene3D" id="3.30.930.10">
    <property type="entry name" value="Bira Bifunctional Protein, Domain 2"/>
    <property type="match status" value="1"/>
</dbReference>
<dbReference type="Gene3D" id="3.30.1360.30">
    <property type="entry name" value="GAD-like domain"/>
    <property type="match status" value="1"/>
</dbReference>
<dbReference type="Gene3D" id="2.40.50.140">
    <property type="entry name" value="Nucleic acid-binding proteins"/>
    <property type="match status" value="1"/>
</dbReference>
<dbReference type="HAMAP" id="MF_00044">
    <property type="entry name" value="Asp_tRNA_synth_type1"/>
    <property type="match status" value="1"/>
</dbReference>
<dbReference type="InterPro" id="IPR004364">
    <property type="entry name" value="Aa-tRNA-synt_II"/>
</dbReference>
<dbReference type="InterPro" id="IPR006195">
    <property type="entry name" value="aa-tRNA-synth_II"/>
</dbReference>
<dbReference type="InterPro" id="IPR045864">
    <property type="entry name" value="aa-tRNA-synth_II/BPL/LPL"/>
</dbReference>
<dbReference type="InterPro" id="IPR004524">
    <property type="entry name" value="Asp-tRNA-ligase_1"/>
</dbReference>
<dbReference type="InterPro" id="IPR047089">
    <property type="entry name" value="Asp-tRNA-ligase_1_N"/>
</dbReference>
<dbReference type="InterPro" id="IPR002312">
    <property type="entry name" value="Asp/Asn-tRNA-synth_IIb"/>
</dbReference>
<dbReference type="InterPro" id="IPR047090">
    <property type="entry name" value="AspRS_core"/>
</dbReference>
<dbReference type="InterPro" id="IPR004115">
    <property type="entry name" value="GAD-like_sf"/>
</dbReference>
<dbReference type="InterPro" id="IPR029351">
    <property type="entry name" value="GAD_dom"/>
</dbReference>
<dbReference type="InterPro" id="IPR012340">
    <property type="entry name" value="NA-bd_OB-fold"/>
</dbReference>
<dbReference type="InterPro" id="IPR004365">
    <property type="entry name" value="NA-bd_OB_tRNA"/>
</dbReference>
<dbReference type="NCBIfam" id="TIGR00459">
    <property type="entry name" value="aspS_bact"/>
    <property type="match status" value="1"/>
</dbReference>
<dbReference type="NCBIfam" id="NF001750">
    <property type="entry name" value="PRK00476.1"/>
    <property type="match status" value="1"/>
</dbReference>
<dbReference type="PANTHER" id="PTHR22594:SF5">
    <property type="entry name" value="ASPARTATE--TRNA LIGASE, MITOCHONDRIAL"/>
    <property type="match status" value="1"/>
</dbReference>
<dbReference type="PANTHER" id="PTHR22594">
    <property type="entry name" value="ASPARTYL/LYSYL-TRNA SYNTHETASE"/>
    <property type="match status" value="1"/>
</dbReference>
<dbReference type="Pfam" id="PF02938">
    <property type="entry name" value="GAD"/>
    <property type="match status" value="1"/>
</dbReference>
<dbReference type="Pfam" id="PF00152">
    <property type="entry name" value="tRNA-synt_2"/>
    <property type="match status" value="1"/>
</dbReference>
<dbReference type="Pfam" id="PF01336">
    <property type="entry name" value="tRNA_anti-codon"/>
    <property type="match status" value="1"/>
</dbReference>
<dbReference type="PRINTS" id="PR01042">
    <property type="entry name" value="TRNASYNTHASP"/>
</dbReference>
<dbReference type="SUPFAM" id="SSF55681">
    <property type="entry name" value="Class II aaRS and biotin synthetases"/>
    <property type="match status" value="1"/>
</dbReference>
<dbReference type="SUPFAM" id="SSF55261">
    <property type="entry name" value="GAD domain-like"/>
    <property type="match status" value="1"/>
</dbReference>
<dbReference type="SUPFAM" id="SSF50249">
    <property type="entry name" value="Nucleic acid-binding proteins"/>
    <property type="match status" value="1"/>
</dbReference>
<dbReference type="PROSITE" id="PS50862">
    <property type="entry name" value="AA_TRNA_LIGASE_II"/>
    <property type="match status" value="1"/>
</dbReference>
<gene>
    <name evidence="1" type="primary">aspS</name>
    <name type="ordered locus">cce_4152</name>
</gene>
<sequence>MRTHYCNHISATDIDKTVTLFGWVDRRRDHGGVIFIDLRDRTGIVQIVSDPQRTPTSYPIAETLRNEYVVKIIGQVSQRPPESLNPKIPTGEVEIYAESIELLNGVNKQLPFVVSSLEAELVKEETRLKYRYLDLRRDRMAKNLQLRHAVVKAMRRYLEDEQQFMEIETPILTRSTPEGARDYLVPSRVNPGQWYALPQSPQLFKQLLMVSGCDRYYQIARCFRDEDLRADRQPEFTQLDMEMSFMSEEEILDLNEGLVCHIFKAVKNIELPRPFPRLTYQDAMAKYGTDRPDTRFDLTLVDVSDIVKDSGFKVFSGAVKNGGKVKVLPIPGGNDIISNVQIKPGGDLFKEATDAGAKGIAYIRVKENNKLDTIGAIKDNLTEEQKRELLARTGAKPGYLLLFGAGDTDTVNKSLSRLRLVIGQRMNLIDPEKINLLWITEFPMFEWNADEKRLEALHHPFTAPNLADLNDLATARAQAYDLVYNGVEIGGGSLRIYQKEIQEKVFETIGLSLEEAYNKFGFLLEAFEYGTPPHGGIAYGLDRLVMLLAGEESIRDVIAFPKTQQASCLLTEAPASVDTKQLKELQVKSTYKPKVKEE</sequence>
<organism>
    <name type="scientific">Crocosphaera subtropica (strain ATCC 51142 / BH68)</name>
    <name type="common">Cyanothece sp. (strain ATCC 51142)</name>
    <dbReference type="NCBI Taxonomy" id="43989"/>
    <lineage>
        <taxon>Bacteria</taxon>
        <taxon>Bacillati</taxon>
        <taxon>Cyanobacteriota</taxon>
        <taxon>Cyanophyceae</taxon>
        <taxon>Oscillatoriophycideae</taxon>
        <taxon>Chroococcales</taxon>
        <taxon>Aphanothecaceae</taxon>
        <taxon>Crocosphaera</taxon>
        <taxon>Crocosphaera subtropica</taxon>
    </lineage>
</organism>
<evidence type="ECO:0000255" key="1">
    <source>
        <dbReference type="HAMAP-Rule" id="MF_00044"/>
    </source>
</evidence>
<keyword id="KW-0030">Aminoacyl-tRNA synthetase</keyword>
<keyword id="KW-0067">ATP-binding</keyword>
<keyword id="KW-0963">Cytoplasm</keyword>
<keyword id="KW-0436">Ligase</keyword>
<keyword id="KW-0547">Nucleotide-binding</keyword>
<keyword id="KW-0648">Protein biosynthesis</keyword>
<keyword id="KW-1185">Reference proteome</keyword>
<accession>B1WRQ9</accession>
<name>SYDND_CROS5</name>
<proteinExistence type="inferred from homology"/>